<organism>
    <name type="scientific">Gallus gallus</name>
    <name type="common">Chicken</name>
    <dbReference type="NCBI Taxonomy" id="9031"/>
    <lineage>
        <taxon>Eukaryota</taxon>
        <taxon>Metazoa</taxon>
        <taxon>Chordata</taxon>
        <taxon>Craniata</taxon>
        <taxon>Vertebrata</taxon>
        <taxon>Euteleostomi</taxon>
        <taxon>Archelosauria</taxon>
        <taxon>Archosauria</taxon>
        <taxon>Dinosauria</taxon>
        <taxon>Saurischia</taxon>
        <taxon>Theropoda</taxon>
        <taxon>Coelurosauria</taxon>
        <taxon>Aves</taxon>
        <taxon>Neognathae</taxon>
        <taxon>Galloanserae</taxon>
        <taxon>Galliformes</taxon>
        <taxon>Phasianidae</taxon>
        <taxon>Phasianinae</taxon>
        <taxon>Gallus</taxon>
    </lineage>
</organism>
<name>PRIPO_CHICK</name>
<evidence type="ECO:0000250" key="1">
    <source>
        <dbReference type="UniProtKB" id="Q96LW4"/>
    </source>
</evidence>
<evidence type="ECO:0000255" key="2"/>
<evidence type="ECO:0000269" key="3">
    <source>
    </source>
</evidence>
<evidence type="ECO:0000269" key="4">
    <source>
    </source>
</evidence>
<evidence type="ECO:0000269" key="5">
    <source>
    </source>
</evidence>
<evidence type="ECO:0000269" key="6">
    <source>
    </source>
</evidence>
<evidence type="ECO:0000303" key="7">
    <source>
    </source>
</evidence>
<evidence type="ECO:0000305" key="8"/>
<reference key="1">
    <citation type="journal article" date="2004" name="Nature">
        <title>Sequence and comparative analysis of the chicken genome provide unique perspectives on vertebrate evolution.</title>
        <authorList>
            <person name="Hillier L.W."/>
            <person name="Miller W."/>
            <person name="Birney E."/>
            <person name="Warren W."/>
            <person name="Hardison R.C."/>
            <person name="Ponting C.P."/>
            <person name="Bork P."/>
            <person name="Burt D.W."/>
            <person name="Groenen M.A.M."/>
            <person name="Delany M.E."/>
            <person name="Dodgson J.B."/>
            <person name="Chinwalla A.T."/>
            <person name="Cliften P.F."/>
            <person name="Clifton S.W."/>
            <person name="Delehaunty K.D."/>
            <person name="Fronick C."/>
            <person name="Fulton R.S."/>
            <person name="Graves T.A."/>
            <person name="Kremitzki C."/>
            <person name="Layman D."/>
            <person name="Magrini V."/>
            <person name="McPherson J.D."/>
            <person name="Miner T.L."/>
            <person name="Minx P."/>
            <person name="Nash W.E."/>
            <person name="Nhan M.N."/>
            <person name="Nelson J.O."/>
            <person name="Oddy L.G."/>
            <person name="Pohl C.S."/>
            <person name="Randall-Maher J."/>
            <person name="Smith S.M."/>
            <person name="Wallis J.W."/>
            <person name="Yang S.-P."/>
            <person name="Romanov M.N."/>
            <person name="Rondelli C.M."/>
            <person name="Paton B."/>
            <person name="Smith J."/>
            <person name="Morrice D."/>
            <person name="Daniels L."/>
            <person name="Tempest H.G."/>
            <person name="Robertson L."/>
            <person name="Masabanda J.S."/>
            <person name="Griffin D.K."/>
            <person name="Vignal A."/>
            <person name="Fillon V."/>
            <person name="Jacobbson L."/>
            <person name="Kerje S."/>
            <person name="Andersson L."/>
            <person name="Crooijmans R.P."/>
            <person name="Aerts J."/>
            <person name="van der Poel J.J."/>
            <person name="Ellegren H."/>
            <person name="Caldwell R.B."/>
            <person name="Hubbard S.J."/>
            <person name="Grafham D.V."/>
            <person name="Kierzek A.M."/>
            <person name="McLaren S.R."/>
            <person name="Overton I.M."/>
            <person name="Arakawa H."/>
            <person name="Beattie K.J."/>
            <person name="Bezzubov Y."/>
            <person name="Boardman P.E."/>
            <person name="Bonfield J.K."/>
            <person name="Croning M.D.R."/>
            <person name="Davies R.M."/>
            <person name="Francis M.D."/>
            <person name="Humphray S.J."/>
            <person name="Scott C.E."/>
            <person name="Taylor R.G."/>
            <person name="Tickle C."/>
            <person name="Brown W.R.A."/>
            <person name="Rogers J."/>
            <person name="Buerstedde J.-M."/>
            <person name="Wilson S.A."/>
            <person name="Stubbs L."/>
            <person name="Ovcharenko I."/>
            <person name="Gordon L."/>
            <person name="Lucas S."/>
            <person name="Miller M.M."/>
            <person name="Inoko H."/>
            <person name="Shiina T."/>
            <person name="Kaufman J."/>
            <person name="Salomonsen J."/>
            <person name="Skjoedt K."/>
            <person name="Wong G.K.-S."/>
            <person name="Wang J."/>
            <person name="Liu B."/>
            <person name="Wang J."/>
            <person name="Yu J."/>
            <person name="Yang H."/>
            <person name="Nefedov M."/>
            <person name="Koriabine M."/>
            <person name="Dejong P.J."/>
            <person name="Goodstadt L."/>
            <person name="Webber C."/>
            <person name="Dickens N.J."/>
            <person name="Letunic I."/>
            <person name="Suyama M."/>
            <person name="Torrents D."/>
            <person name="von Mering C."/>
            <person name="Zdobnov E.M."/>
            <person name="Makova K."/>
            <person name="Nekrutenko A."/>
            <person name="Elnitski L."/>
            <person name="Eswara P."/>
            <person name="King D.C."/>
            <person name="Yang S.-P."/>
            <person name="Tyekucheva S."/>
            <person name="Radakrishnan A."/>
            <person name="Harris R.S."/>
            <person name="Chiaromonte F."/>
            <person name="Taylor J."/>
            <person name="He J."/>
            <person name="Rijnkels M."/>
            <person name="Griffiths-Jones S."/>
            <person name="Ureta-Vidal A."/>
            <person name="Hoffman M.M."/>
            <person name="Severin J."/>
            <person name="Searle S.M.J."/>
            <person name="Law A.S."/>
            <person name="Speed D."/>
            <person name="Waddington D."/>
            <person name="Cheng Z."/>
            <person name="Tuzun E."/>
            <person name="Eichler E."/>
            <person name="Bao Z."/>
            <person name="Flicek P."/>
            <person name="Shteynberg D.D."/>
            <person name="Brent M.R."/>
            <person name="Bye J.M."/>
            <person name="Huckle E.J."/>
            <person name="Chatterji S."/>
            <person name="Dewey C."/>
            <person name="Pachter L."/>
            <person name="Kouranov A."/>
            <person name="Mourelatos Z."/>
            <person name="Hatzigeorgiou A.G."/>
            <person name="Paterson A.H."/>
            <person name="Ivarie R."/>
            <person name="Brandstrom M."/>
            <person name="Axelsson E."/>
            <person name="Backstrom N."/>
            <person name="Berlin S."/>
            <person name="Webster M.T."/>
            <person name="Pourquie O."/>
            <person name="Reymond A."/>
            <person name="Ucla C."/>
            <person name="Antonarakis S.E."/>
            <person name="Long M."/>
            <person name="Emerson J.J."/>
            <person name="Betran E."/>
            <person name="Dupanloup I."/>
            <person name="Kaessmann H."/>
            <person name="Hinrichs A.S."/>
            <person name="Bejerano G."/>
            <person name="Furey T.S."/>
            <person name="Harte R.A."/>
            <person name="Raney B."/>
            <person name="Siepel A."/>
            <person name="Kent W.J."/>
            <person name="Haussler D."/>
            <person name="Eyras E."/>
            <person name="Castelo R."/>
            <person name="Abril J.F."/>
            <person name="Castellano S."/>
            <person name="Camara F."/>
            <person name="Parra G."/>
            <person name="Guigo R."/>
            <person name="Bourque G."/>
            <person name="Tesler G."/>
            <person name="Pevzner P.A."/>
            <person name="Smit A."/>
            <person name="Fulton L.A."/>
            <person name="Mardis E.R."/>
            <person name="Wilson R.K."/>
        </authorList>
    </citation>
    <scope>NUCLEOTIDE SEQUENCE [LARGE SCALE GENOMIC DNA]</scope>
    <source>
        <strain>Red jungle fowl</strain>
    </source>
</reference>
<reference key="2">
    <citation type="journal article" date="2016" name="Cell Cycle">
        <title>PrimPol-deficient cells exhibit a pronounced G2 checkpoint response following UV damage.</title>
        <authorList>
            <person name="Bailey L.J."/>
            <person name="Bianchi J."/>
            <person name="Hegarat N."/>
            <person name="Hochegger H."/>
            <person name="Doherty A.J."/>
        </authorList>
    </citation>
    <scope>FUNCTION</scope>
</reference>
<reference key="3">
    <citation type="journal article" date="2016" name="Cell Cycle">
        <title>Repriming by PrimPol is critical for DNA replication restart downstream of lesions and chain-terminating nucleosides.</title>
        <authorList>
            <person name="Kobayashi K."/>
            <person name="Guilliam T.A."/>
            <person name="Tsuda M."/>
            <person name="Yamamoto J."/>
            <person name="Bailey L.J."/>
            <person name="Iwai S."/>
            <person name="Takeda S."/>
            <person name="Doherty A.J."/>
            <person name="Hirota K."/>
        </authorList>
    </citation>
    <scope>FUNCTION</scope>
</reference>
<reference key="4">
    <citation type="journal article" date="2016" name="Mol. Cell">
        <title>PrimPol is required for replicative tolerance of G quadruplexes in vertebrate cells.</title>
        <authorList>
            <person name="Schiavone D."/>
            <person name="Jozwiakowski S.K."/>
            <person name="Romanello M."/>
            <person name="Guilbaud G."/>
            <person name="Guilliam T.A."/>
            <person name="Bailey L.J."/>
            <person name="Sale J.E."/>
            <person name="Doherty A.J."/>
        </authorList>
    </citation>
    <scope>FUNCTION</scope>
</reference>
<reference key="5">
    <citation type="journal article" date="2019" name="EMBO J.">
        <title>R-loop formation during S phase is restricted by PrimPol-mediated repriming.</title>
        <authorList>
            <person name="Svikovic S."/>
            <person name="Crisp A."/>
            <person name="Tan-Wong S.M."/>
            <person name="Guilliam T.A."/>
            <person name="Doherty A.J."/>
            <person name="Proudfoot N.J."/>
            <person name="Guilbaud G."/>
            <person name="Sale J.E."/>
        </authorList>
    </citation>
    <scope>FUNCTION</scope>
    <scope>CATALYTIC ACTIVITY</scope>
</reference>
<protein>
    <recommendedName>
        <fullName evidence="7">DNA-directed primase/polymerase protein</fullName>
        <ecNumber evidence="6">2.7.7.102</ecNumber>
        <ecNumber evidence="1">2.7.7.7</ecNumber>
    </recommendedName>
</protein>
<keyword id="KW-0025">Alternative splicing</keyword>
<keyword id="KW-0158">Chromosome</keyword>
<keyword id="KW-0175">Coiled coil</keyword>
<keyword id="KW-0227">DNA damage</keyword>
<keyword id="KW-0234">DNA repair</keyword>
<keyword id="KW-0239">DNA-directed DNA polymerase</keyword>
<keyword id="KW-0240">DNA-directed RNA polymerase</keyword>
<keyword id="KW-0464">Manganese</keyword>
<keyword id="KW-0479">Metal-binding</keyword>
<keyword id="KW-0496">Mitochondrion</keyword>
<keyword id="KW-0548">Nucleotidyltransferase</keyword>
<keyword id="KW-0539">Nucleus</keyword>
<keyword id="KW-1185">Reference proteome</keyword>
<keyword id="KW-0804">Transcription</keyword>
<keyword id="KW-0808">Transferase</keyword>
<keyword id="KW-0862">Zinc</keyword>
<proteinExistence type="evidence at protein level"/>
<feature type="chain" id="PRO_0000449147" description="DNA-directed primase/polymerase protein">
    <location>
        <begin position="1"/>
        <end position="574"/>
    </location>
</feature>
<feature type="coiled-coil region" evidence="2">
    <location>
        <begin position="2"/>
        <end position="22"/>
    </location>
</feature>
<feature type="short sequence motif" description="Zinc knuckle motif" evidence="1">
    <location>
        <begin position="424"/>
        <end position="457"/>
    </location>
</feature>
<feature type="binding site" evidence="1">
    <location>
        <position position="76"/>
    </location>
    <ligand>
        <name>substrate</name>
    </ligand>
</feature>
<feature type="binding site" evidence="1">
    <location>
        <begin position="116"/>
        <end position="118"/>
    </location>
    <ligand>
        <name>substrate</name>
    </ligand>
</feature>
<feature type="binding site" evidence="1">
    <location>
        <position position="116"/>
    </location>
    <ligand>
        <name>Mn(2+)</name>
        <dbReference type="ChEBI" id="CHEBI:29035"/>
        <note>catalytic</note>
    </ligand>
</feature>
<feature type="binding site" evidence="1">
    <location>
        <position position="118"/>
    </location>
    <ligand>
        <name>Mn(2+)</name>
        <dbReference type="ChEBI" id="CHEBI:29035"/>
        <note>catalytic</note>
    </ligand>
</feature>
<feature type="binding site" evidence="1">
    <location>
        <begin position="167"/>
        <end position="171"/>
    </location>
    <ligand>
        <name>substrate</name>
    </ligand>
</feature>
<feature type="binding site" evidence="1">
    <location>
        <begin position="291"/>
        <end position="294"/>
    </location>
    <ligand>
        <name>substrate</name>
    </ligand>
</feature>
<feature type="binding site" evidence="1">
    <location>
        <position position="300"/>
    </location>
    <ligand>
        <name>substrate</name>
    </ligand>
</feature>
<feature type="binding site" evidence="1">
    <location>
        <position position="424"/>
    </location>
    <ligand>
        <name>Zn(2+)</name>
        <dbReference type="ChEBI" id="CHEBI:29105"/>
    </ligand>
</feature>
<feature type="binding site" evidence="1">
    <location>
        <position position="431"/>
    </location>
    <ligand>
        <name>Zn(2+)</name>
        <dbReference type="ChEBI" id="CHEBI:29105"/>
    </ligand>
</feature>
<feature type="binding site" evidence="1">
    <location>
        <position position="451"/>
    </location>
    <ligand>
        <name>Zn(2+)</name>
        <dbReference type="ChEBI" id="CHEBI:29105"/>
    </ligand>
</feature>
<feature type="binding site" evidence="1">
    <location>
        <position position="456"/>
    </location>
    <ligand>
        <name>Zn(2+)</name>
        <dbReference type="ChEBI" id="CHEBI:29105"/>
    </ligand>
</feature>
<feature type="splice variant" id="VSP_060507" description="In isoform 2.">
    <original>REPMEGYQESPYPEIDCFVRSLINKDGVQG</original>
    <variation>R</variation>
    <location>
        <begin position="371"/>
        <end position="400"/>
    </location>
</feature>
<accession>A0A3Q2TTB3</accession>
<accession>A0A3Q2UFR8</accession>
<accession>E1BS13</accession>
<gene>
    <name evidence="7" type="primary">PRIMPOL</name>
</gene>
<dbReference type="EC" id="2.7.7.102" evidence="6"/>
<dbReference type="EC" id="2.7.7.7" evidence="1"/>
<dbReference type="EMBL" id="AADN05000017">
    <property type="status" value="NOT_ANNOTATED_CDS"/>
    <property type="molecule type" value="Genomic_DNA"/>
</dbReference>
<dbReference type="RefSeq" id="XP_015131716.1">
    <property type="nucleotide sequence ID" value="XM_015276230.1"/>
</dbReference>
<dbReference type="SMR" id="A0A3Q2TTB3"/>
<dbReference type="FunCoup" id="A0A3Q2TTB3">
    <property type="interactions" value="2160"/>
</dbReference>
<dbReference type="STRING" id="9031.ENSGALP00000065409"/>
<dbReference type="PaxDb" id="9031-ENSGALP00000037470"/>
<dbReference type="VEuPathDB" id="HostDB:geneid_422549"/>
<dbReference type="eggNOG" id="ENOG502QS1Q">
    <property type="taxonomic scope" value="Eukaryota"/>
</dbReference>
<dbReference type="HOGENOM" id="CLU_027838_0_0_1"/>
<dbReference type="InParanoid" id="A0A3Q2TTB3"/>
<dbReference type="OrthoDB" id="5988181at2759"/>
<dbReference type="TreeFam" id="TF328961"/>
<dbReference type="PRO" id="PR:A0A3Q2TTB3"/>
<dbReference type="Proteomes" id="UP000000539">
    <property type="component" value="Chromosome 4"/>
</dbReference>
<dbReference type="Bgee" id="ENSGALG00000010636">
    <property type="expression patterns" value="Expressed in spermatid and 13 other cell types or tissues"/>
</dbReference>
<dbReference type="GO" id="GO:0000428">
    <property type="term" value="C:DNA-directed RNA polymerase complex"/>
    <property type="evidence" value="ECO:0007669"/>
    <property type="project" value="UniProtKB-KW"/>
</dbReference>
<dbReference type="GO" id="GO:0005759">
    <property type="term" value="C:mitochondrial matrix"/>
    <property type="evidence" value="ECO:0000318"/>
    <property type="project" value="GO_Central"/>
</dbReference>
<dbReference type="GO" id="GO:0005634">
    <property type="term" value="C:nucleus"/>
    <property type="evidence" value="ECO:0000318"/>
    <property type="project" value="GO_Central"/>
</dbReference>
<dbReference type="GO" id="GO:0005657">
    <property type="term" value="C:replication fork"/>
    <property type="evidence" value="ECO:0000250"/>
    <property type="project" value="UniProtKB"/>
</dbReference>
<dbReference type="GO" id="GO:0003682">
    <property type="term" value="F:chromatin binding"/>
    <property type="evidence" value="ECO:0000250"/>
    <property type="project" value="UniProtKB"/>
</dbReference>
<dbReference type="GO" id="GO:0003887">
    <property type="term" value="F:DNA-directed DNA polymerase activity"/>
    <property type="evidence" value="ECO:0000250"/>
    <property type="project" value="UniProtKB"/>
</dbReference>
<dbReference type="GO" id="GO:0003899">
    <property type="term" value="F:DNA-directed RNA polymerase activity"/>
    <property type="evidence" value="ECO:0000315"/>
    <property type="project" value="UniProtKB"/>
</dbReference>
<dbReference type="GO" id="GO:0030145">
    <property type="term" value="F:manganese ion binding"/>
    <property type="evidence" value="ECO:0000250"/>
    <property type="project" value="UniProtKB"/>
</dbReference>
<dbReference type="GO" id="GO:0008270">
    <property type="term" value="F:zinc ion binding"/>
    <property type="evidence" value="ECO:0000250"/>
    <property type="project" value="UniProtKB"/>
</dbReference>
<dbReference type="GO" id="GO:0042276">
    <property type="term" value="P:error-prone translesion synthesis"/>
    <property type="evidence" value="ECO:0000250"/>
    <property type="project" value="UniProtKB"/>
</dbReference>
<dbReference type="GO" id="GO:0043504">
    <property type="term" value="P:mitochondrial DNA repair"/>
    <property type="evidence" value="ECO:0000250"/>
    <property type="project" value="UniProtKB"/>
</dbReference>
<dbReference type="GO" id="GO:0006264">
    <property type="term" value="P:mitochondrial DNA replication"/>
    <property type="evidence" value="ECO:0000318"/>
    <property type="project" value="GO_Central"/>
</dbReference>
<dbReference type="GO" id="GO:0062176">
    <property type="term" value="P:R-loop processing"/>
    <property type="evidence" value="ECO:0000315"/>
    <property type="project" value="UniProtKB"/>
</dbReference>
<dbReference type="GO" id="GO:0031297">
    <property type="term" value="P:replication fork processing"/>
    <property type="evidence" value="ECO:0000250"/>
    <property type="project" value="UniProtKB"/>
</dbReference>
<dbReference type="GO" id="GO:0009411">
    <property type="term" value="P:response to UV"/>
    <property type="evidence" value="ECO:0000318"/>
    <property type="project" value="GO_Central"/>
</dbReference>
<dbReference type="GO" id="GO:0019985">
    <property type="term" value="P:translesion synthesis"/>
    <property type="evidence" value="ECO:0000318"/>
    <property type="project" value="GO_Central"/>
</dbReference>
<dbReference type="CDD" id="cd22256">
    <property type="entry name" value="PrimPol_RBD"/>
    <property type="match status" value="1"/>
</dbReference>
<dbReference type="InterPro" id="IPR044917">
    <property type="entry name" value="PRIMPOL"/>
</dbReference>
<dbReference type="PANTHER" id="PTHR31399">
    <property type="entry name" value="DNA-DIRECTED PRIMASE / POLYMERASE PROTEIN"/>
    <property type="match status" value="1"/>
</dbReference>
<dbReference type="PANTHER" id="PTHR31399:SF0">
    <property type="entry name" value="DNA-DIRECTED PRIMASE_POLYMERASE PROTEIN"/>
    <property type="match status" value="1"/>
</dbReference>
<dbReference type="Pfam" id="PF03121">
    <property type="entry name" value="Herpes_UL52"/>
    <property type="match status" value="1"/>
</dbReference>
<comment type="function">
    <text evidence="1 3 4 5 6">DNA primase and DNA polymerase required to tolerate replication-stalling lesions by bypassing them (PubMed:26626482, PubMed:30478192). Required to facilitate mitochondrial and nuclear replication fork progression by initiating de novo DNA synthesis using dNTPs and acting as an error-prone DNA polymerase able to bypass certain DNA lesions (PubMed:26694751, PubMed:27230014). Shows a high capacity to tolerate DNA damage lesions such as 8oxoG and abasic sites in DNA (By similarity). Provides different translesion synthesis alternatives when DNA replication is stalled: able to synthesize DNA primers downstream of lesions, such as UV lesions, R-loops and G-quadruplexes, to allow DNA replication to continue (PubMed:26626482, PubMed:26694751, PubMed:27230014). Can also realign primers ahead of 'unreadable lesions' such as abasic sites and 6-4 photoproduct (6-4 pyrimidine-pyrimidinone), thereby skipping the lesion. Repriming avoids fork degradation while leading to accumulation of internal ssDNA gaps behind the forks (By similarity). Also able to incorporate nucleotides opposite DNA lesions such as 8oxoG, like a regular translesion synthesis DNA polymerase (By similarity). Also required for reinitiating stalled forks after ultraviolet (UV) damage during nuclear DNA replication (By similarity). Required for mitochondrial DNA (mtDNA) synthesis and replication, by reinitiating synthesis after UV damage or in the presence of chain-terminating nucleotides (By similarity). In addition to its role in DNA damage response, also required to maintain efficient nuclear and mitochondrial DNA replication in unperturbed cells (By similarity).</text>
</comment>
<comment type="catalytic activity">
    <reaction evidence="6">
        <text>ssDNA + n NTP = ssDNA/pppN(pN)n-1 hybrid + (n-1) diphosphate.</text>
        <dbReference type="EC" id="2.7.7.102"/>
    </reaction>
</comment>
<comment type="catalytic activity">
    <reaction evidence="1">
        <text>DNA(n) + a 2'-deoxyribonucleoside 5'-triphosphate = DNA(n+1) + diphosphate</text>
        <dbReference type="Rhea" id="RHEA:22508"/>
        <dbReference type="Rhea" id="RHEA-COMP:17339"/>
        <dbReference type="Rhea" id="RHEA-COMP:17340"/>
        <dbReference type="ChEBI" id="CHEBI:33019"/>
        <dbReference type="ChEBI" id="CHEBI:61560"/>
        <dbReference type="ChEBI" id="CHEBI:173112"/>
        <dbReference type="EC" id="2.7.7.7"/>
    </reaction>
    <physiologicalReaction direction="left-to-right" evidence="1">
        <dbReference type="Rhea" id="RHEA:22509"/>
    </physiologicalReaction>
</comment>
<comment type="cofactor">
    <cofactor evidence="1">
        <name>Mn(2+)</name>
        <dbReference type="ChEBI" id="CHEBI:29035"/>
    </cofactor>
    <text evidence="1">Can act both with Mn(2+) and Mg(2+) as cofactor in vitro, but Mn(2+) is the preferred cofactor in vivo.</text>
</comment>
<comment type="subcellular location">
    <subcellularLocation>
        <location evidence="1">Nucleus</location>
    </subcellularLocation>
    <subcellularLocation>
        <location evidence="1">Mitochondrion matrix</location>
    </subcellularLocation>
    <subcellularLocation>
        <location evidence="1">Chromosome</location>
    </subcellularLocation>
</comment>
<comment type="alternative products">
    <event type="alternative splicing"/>
    <isoform>
        <id>A0A3Q2TTB3-1</id>
        <name>1</name>
        <sequence type="displayed"/>
    </isoform>
    <isoform>
        <id>A0A3Q2TTB3-2</id>
        <name>2</name>
        <sequence type="described" ref="VSP_060507"/>
    </isoform>
</comment>
<comment type="domain">
    <text evidence="1">The zinc knuckle motif binds zinc and is required for the DNA primase activity. It facilitates the binding and selection of the 5'-nucleotide of the newly synthesized primer and the recognition of preferred initiation sites.</text>
</comment>
<comment type="domain">
    <text evidence="1">The presence of an Asp-Aaa-Glu (DxE) motif in the metal-binding active site favors the use of Mn(2+) ions to achieve optimal incoming nucleotide stabilization, especially required during primer synthesis. Glu-118 is required to stabilize the incoming nucleotide at the 3'-site.</text>
</comment>
<comment type="similarity">
    <text evidence="8">Belongs to the eukaryotic-type primase small subunit family.</text>
</comment>
<sequence>MKRKWEERVKKVEELASYYERNPLPTVYKPRLSKPLQPSRVWKIFCRQADAFRFVKTCKEDVHVFALERNTQNGQRFYLVTTYQELWYYYTKGYKTSLMHCYEVIPEKDACKLYFDLEFYKAANPGADGKDMVAKLIELVSQKLKELYDVNCSARDVLNLDSSTDEKFSRHLIFLPCKTVFKDNIHVGNFVRTILQPAIRLVGSNVAAPIAEGGAGYTSQCSAPTVELDGPLTNLTAVEDASKGWPAIADQRKETETSHHGENSEFSFLIVNNKEGDKQLFVDLGVYTRNRNFRMYKSSKAGKNVILTIAEDNKFVPNCEENVSLEEAYFLSSLVCNVRFEDGTKILSSNFVEEEIKMSAFLRSKTTRSTREPMEGYQESPYPEIDCFVRSLINKDGVQGGIRQWNYFSGEEILVYDISGYRWCENIGRAHRSNNIMILVDLKKEVWYQKCHDPVCREKNFKSQSLPLPSRICLSSLFIEEEDHMVTDERENTEVTSHSNPADLSESSAYLAINTSQDTQWDNASDDAYLVETAEDVELAEAADYSLGYDTEEIPDEVLLEMSWKQDTCSKDDS</sequence>